<dbReference type="EMBL" id="Z29233">
    <property type="protein sequence ID" value="CAA82432.1"/>
    <property type="molecule type" value="Genomic_DNA"/>
</dbReference>
<dbReference type="PIR" id="S41261">
    <property type="entry name" value="S41261"/>
</dbReference>
<dbReference type="SMR" id="P69637"/>
<dbReference type="GO" id="GO:0009507">
    <property type="term" value="C:chloroplast"/>
    <property type="evidence" value="ECO:0007669"/>
    <property type="project" value="UniProtKB-SubCell"/>
</dbReference>
<dbReference type="GO" id="GO:0015935">
    <property type="term" value="C:small ribosomal subunit"/>
    <property type="evidence" value="ECO:0007669"/>
    <property type="project" value="InterPro"/>
</dbReference>
<dbReference type="GO" id="GO:0019843">
    <property type="term" value="F:rRNA binding"/>
    <property type="evidence" value="ECO:0007669"/>
    <property type="project" value="UniProtKB-KW"/>
</dbReference>
<dbReference type="GO" id="GO:0003735">
    <property type="term" value="F:structural constituent of ribosome"/>
    <property type="evidence" value="ECO:0007669"/>
    <property type="project" value="InterPro"/>
</dbReference>
<dbReference type="GO" id="GO:0042274">
    <property type="term" value="P:ribosomal small subunit biogenesis"/>
    <property type="evidence" value="ECO:0007669"/>
    <property type="project" value="TreeGrafter"/>
</dbReference>
<dbReference type="GO" id="GO:0006412">
    <property type="term" value="P:translation"/>
    <property type="evidence" value="ECO:0007669"/>
    <property type="project" value="InterPro"/>
</dbReference>
<dbReference type="CDD" id="cd00165">
    <property type="entry name" value="S4"/>
    <property type="match status" value="1"/>
</dbReference>
<dbReference type="FunFam" id="1.10.1050.10:FF:000002">
    <property type="entry name" value="30S ribosomal protein S4, chloroplastic"/>
    <property type="match status" value="1"/>
</dbReference>
<dbReference type="FunFam" id="3.10.290.10:FF:000081">
    <property type="entry name" value="30S ribosomal protein S4, chloroplastic"/>
    <property type="match status" value="1"/>
</dbReference>
<dbReference type="Gene3D" id="1.10.1050.10">
    <property type="entry name" value="Ribosomal Protein S4 Delta 41, Chain A, domain 1"/>
    <property type="match status" value="1"/>
</dbReference>
<dbReference type="Gene3D" id="3.10.290.10">
    <property type="entry name" value="RNA-binding S4 domain"/>
    <property type="match status" value="1"/>
</dbReference>
<dbReference type="HAMAP" id="MF_01306_B">
    <property type="entry name" value="Ribosomal_uS4_B"/>
    <property type="match status" value="1"/>
</dbReference>
<dbReference type="InterPro" id="IPR022801">
    <property type="entry name" value="Ribosomal_uS4"/>
</dbReference>
<dbReference type="InterPro" id="IPR005709">
    <property type="entry name" value="Ribosomal_uS4_bac-type"/>
</dbReference>
<dbReference type="InterPro" id="IPR018079">
    <property type="entry name" value="Ribosomal_uS4_CS"/>
</dbReference>
<dbReference type="InterPro" id="IPR001912">
    <property type="entry name" value="Ribosomal_uS4_N"/>
</dbReference>
<dbReference type="InterPro" id="IPR002942">
    <property type="entry name" value="S4_RNA-bd"/>
</dbReference>
<dbReference type="InterPro" id="IPR036986">
    <property type="entry name" value="S4_RNA-bd_sf"/>
</dbReference>
<dbReference type="NCBIfam" id="NF003717">
    <property type="entry name" value="PRK05327.1"/>
    <property type="match status" value="1"/>
</dbReference>
<dbReference type="NCBIfam" id="TIGR01017">
    <property type="entry name" value="rpsD_bact"/>
    <property type="match status" value="1"/>
</dbReference>
<dbReference type="PANTHER" id="PTHR11831">
    <property type="entry name" value="30S 40S RIBOSOMAL PROTEIN"/>
    <property type="match status" value="1"/>
</dbReference>
<dbReference type="PANTHER" id="PTHR11831:SF4">
    <property type="entry name" value="SMALL RIBOSOMAL SUBUNIT PROTEIN US4M"/>
    <property type="match status" value="1"/>
</dbReference>
<dbReference type="Pfam" id="PF00163">
    <property type="entry name" value="Ribosomal_S4"/>
    <property type="match status" value="1"/>
</dbReference>
<dbReference type="Pfam" id="PF01479">
    <property type="entry name" value="S4"/>
    <property type="match status" value="1"/>
</dbReference>
<dbReference type="SMART" id="SM01390">
    <property type="entry name" value="Ribosomal_S4"/>
    <property type="match status" value="1"/>
</dbReference>
<dbReference type="SMART" id="SM00363">
    <property type="entry name" value="S4"/>
    <property type="match status" value="1"/>
</dbReference>
<dbReference type="SUPFAM" id="SSF55174">
    <property type="entry name" value="Alpha-L RNA-binding motif"/>
    <property type="match status" value="1"/>
</dbReference>
<dbReference type="PROSITE" id="PS00632">
    <property type="entry name" value="RIBOSOMAL_S4"/>
    <property type="match status" value="1"/>
</dbReference>
<dbReference type="PROSITE" id="PS50889">
    <property type="entry name" value="S4"/>
    <property type="match status" value="1"/>
</dbReference>
<evidence type="ECO:0000250" key="1"/>
<evidence type="ECO:0000256" key="2">
    <source>
        <dbReference type="SAM" id="MobiDB-lite"/>
    </source>
</evidence>
<evidence type="ECO:0000305" key="3"/>
<organism>
    <name type="scientific">Calamagrostis epigeios</name>
    <name type="common">Wood small-reed grass</name>
    <name type="synonym">Arundo epigeios</name>
    <dbReference type="NCBI Taxonomy" id="29668"/>
    <lineage>
        <taxon>Eukaryota</taxon>
        <taxon>Viridiplantae</taxon>
        <taxon>Streptophyta</taxon>
        <taxon>Embryophyta</taxon>
        <taxon>Tracheophyta</taxon>
        <taxon>Spermatophyta</taxon>
        <taxon>Magnoliopsida</taxon>
        <taxon>Liliopsida</taxon>
        <taxon>Poales</taxon>
        <taxon>Poaceae</taxon>
        <taxon>BOP clade</taxon>
        <taxon>Pooideae</taxon>
        <taxon>Poodae</taxon>
        <taxon>Poeae</taxon>
        <taxon>Poeae Chloroplast Group 1 (Aveneae type)</taxon>
        <taxon>Agrostidodinae</taxon>
        <taxon>Agrostidinae</taxon>
        <taxon>Calamagrostis</taxon>
    </lineage>
</organism>
<reference key="1">
    <citation type="journal article" date="1994" name="Plant Syst. Evol.">
        <title>The chloroplast gene rps4 as a tool for the study of Poaceae phylogeny.</title>
        <authorList>
            <person name="Nadot S."/>
            <person name="Bajon R."/>
            <person name="Lejeune B."/>
        </authorList>
        <dbReference type="AGRICOLA" id="IND20417698"/>
    </citation>
    <scope>NUCLEOTIDE SEQUENCE [GENOMIC DNA]</scope>
</reference>
<proteinExistence type="inferred from homology"/>
<sequence>MSRYRGPRLKKIRRLGALPGLTRKTPKSGSNLKKKFHSGKKEQYRIRLQEKQKLRFHYGLTERQLLRYVHIAGKAKRSTGQVLLQLLEMRLDNILFRLGMASTIPGARQLVNHRHILVNGRIVNIPSFRCKPRDIITTKDNQRSKGLVQNYIASSDPGKLPKHLTIDTLEYKGLVNKILDRKWVGLKINELLVVEY</sequence>
<protein>
    <recommendedName>
        <fullName evidence="3">Small ribosomal subunit protein uS4c</fullName>
    </recommendedName>
    <alternativeName>
        <fullName>30S ribosomal protein S4, chloroplastic</fullName>
    </alternativeName>
</protein>
<geneLocation type="chloroplast"/>
<feature type="chain" id="PRO_0000132550" description="Small ribosomal subunit protein uS4c">
    <location>
        <begin position="1"/>
        <end position="196" status="greater than"/>
    </location>
</feature>
<feature type="domain" description="S4 RNA-binding">
    <location>
        <begin position="89"/>
        <end position="157"/>
    </location>
</feature>
<feature type="region of interest" description="Disordered" evidence="2">
    <location>
        <begin position="17"/>
        <end position="36"/>
    </location>
</feature>
<feature type="non-terminal residue">
    <location>
        <position position="196"/>
    </location>
</feature>
<keyword id="KW-0150">Chloroplast</keyword>
<keyword id="KW-0934">Plastid</keyword>
<keyword id="KW-0687">Ribonucleoprotein</keyword>
<keyword id="KW-0689">Ribosomal protein</keyword>
<keyword id="KW-0694">RNA-binding</keyword>
<keyword id="KW-0699">rRNA-binding</keyword>
<comment type="function">
    <text evidence="1">One of the primary rRNA binding proteins, it binds directly to 16S rRNA where it nucleates assembly of the body of the 30S subunit.</text>
</comment>
<comment type="function">
    <text evidence="1">With S5 and S12 plays an important role in translational accuracy.</text>
</comment>
<comment type="subunit">
    <text evidence="1">Part of the 30S ribosomal subunit. Contacts protein S5. The interaction surface between S4 and S5 is involved in control of translational fidelity (By similarity).</text>
</comment>
<comment type="subcellular location">
    <subcellularLocation>
        <location>Plastid</location>
        <location>Chloroplast</location>
    </subcellularLocation>
</comment>
<comment type="similarity">
    <text evidence="3">Belongs to the universal ribosomal protein uS4 family.</text>
</comment>
<accession>P69637</accession>
<accession>P36452</accession>
<accession>P36468</accession>
<gene>
    <name type="primary">rps4</name>
</gene>
<name>RR4_CALEP</name>